<proteinExistence type="evidence at protein level"/>
<comment type="function">
    <text evidence="1">Provides the (R)-glutamate required for cell wall biosynthesis.</text>
</comment>
<comment type="catalytic activity">
    <reaction evidence="1">
        <text>L-glutamate = D-glutamate</text>
        <dbReference type="Rhea" id="RHEA:12813"/>
        <dbReference type="ChEBI" id="CHEBI:29985"/>
        <dbReference type="ChEBI" id="CHEBI:29986"/>
        <dbReference type="EC" id="5.1.1.3"/>
    </reaction>
</comment>
<comment type="pathway">
    <text evidence="1">Cell wall biogenesis; peptidoglycan biosynthesis.</text>
</comment>
<comment type="similarity">
    <text evidence="1">Belongs to the aspartate/glutamate racemases family.</text>
</comment>
<keyword id="KW-0002">3D-structure</keyword>
<keyword id="KW-0133">Cell shape</keyword>
<keyword id="KW-0961">Cell wall biogenesis/degradation</keyword>
<keyword id="KW-0413">Isomerase</keyword>
<keyword id="KW-0573">Peptidoglycan synthesis</keyword>
<keyword id="KW-1185">Reference proteome</keyword>
<protein>
    <recommendedName>
        <fullName evidence="1">Glutamate racemase</fullName>
        <ecNumber evidence="1">5.1.1.3</ecNumber>
    </recommendedName>
</protein>
<evidence type="ECO:0000255" key="1">
    <source>
        <dbReference type="HAMAP-Rule" id="MF_00258"/>
    </source>
</evidence>
<evidence type="ECO:0007829" key="2">
    <source>
        <dbReference type="PDB" id="5W16"/>
    </source>
</evidence>
<evidence type="ECO:0007829" key="3">
    <source>
        <dbReference type="PDB" id="6DLI"/>
    </source>
</evidence>
<sequence>MKDPKAPIGVFDSGVGGLTVLKALRRLLPREEFLYFGDTARVPYGGKPLAMVRRFAWEIAGFLLRQGVKAIVVACNTASSAALPDLAEDLSVPVFGVVEPAARAARGFRKVGLIGTQATVESGAYPRYVDLAWAKACPLFVPLVEEGLWDDPVALLVARHYLEDAPKDLEALILGCTHYPFLKGAIGAVLPGVALLDSAELTAQEVARALEAEGLLNPEGRGRTFHLVTGDPEAYRALAERLGERVEAVRRVSLEEL</sequence>
<dbReference type="EC" id="5.1.1.3" evidence="1"/>
<dbReference type="EMBL" id="AP008226">
    <property type="protein sequence ID" value="BAD71466.1"/>
    <property type="molecule type" value="Genomic_DNA"/>
</dbReference>
<dbReference type="RefSeq" id="WP_011228827.1">
    <property type="nucleotide sequence ID" value="NC_006461.1"/>
</dbReference>
<dbReference type="RefSeq" id="YP_144909.1">
    <property type="nucleotide sequence ID" value="NC_006461.1"/>
</dbReference>
<dbReference type="PDB" id="5W16">
    <property type="method" value="X-ray"/>
    <property type="resolution" value="1.91 A"/>
    <property type="chains" value="A/B/C/D=2-257"/>
</dbReference>
<dbReference type="PDB" id="6DLI">
    <property type="method" value="X-ray"/>
    <property type="resolution" value="2.70 A"/>
    <property type="chains" value="A/B/C/D=2-257"/>
</dbReference>
<dbReference type="PDBsum" id="5W16"/>
<dbReference type="PDBsum" id="6DLI"/>
<dbReference type="SMR" id="Q5SHT7"/>
<dbReference type="EnsemblBacteria" id="BAD71466">
    <property type="protein sequence ID" value="BAD71466"/>
    <property type="gene ID" value="BAD71466"/>
</dbReference>
<dbReference type="GeneID" id="3169688"/>
<dbReference type="KEGG" id="ttj:TTHA1643"/>
<dbReference type="PATRIC" id="fig|300852.9.peg.1613"/>
<dbReference type="eggNOG" id="COG0796">
    <property type="taxonomic scope" value="Bacteria"/>
</dbReference>
<dbReference type="HOGENOM" id="CLU_052344_0_2_0"/>
<dbReference type="PhylomeDB" id="Q5SHT7"/>
<dbReference type="UniPathway" id="UPA00219"/>
<dbReference type="Proteomes" id="UP000000532">
    <property type="component" value="Chromosome"/>
</dbReference>
<dbReference type="GO" id="GO:0008881">
    <property type="term" value="F:glutamate racemase activity"/>
    <property type="evidence" value="ECO:0007669"/>
    <property type="project" value="UniProtKB-UniRule"/>
</dbReference>
<dbReference type="GO" id="GO:0071555">
    <property type="term" value="P:cell wall organization"/>
    <property type="evidence" value="ECO:0007669"/>
    <property type="project" value="UniProtKB-KW"/>
</dbReference>
<dbReference type="GO" id="GO:0009252">
    <property type="term" value="P:peptidoglycan biosynthetic process"/>
    <property type="evidence" value="ECO:0007669"/>
    <property type="project" value="UniProtKB-UniRule"/>
</dbReference>
<dbReference type="GO" id="GO:0008360">
    <property type="term" value="P:regulation of cell shape"/>
    <property type="evidence" value="ECO:0007669"/>
    <property type="project" value="UniProtKB-KW"/>
</dbReference>
<dbReference type="FunFam" id="3.40.50.1860:FF:000002">
    <property type="entry name" value="Glutamate racemase"/>
    <property type="match status" value="1"/>
</dbReference>
<dbReference type="Gene3D" id="3.40.50.1860">
    <property type="match status" value="2"/>
</dbReference>
<dbReference type="HAMAP" id="MF_00258">
    <property type="entry name" value="Glu_racemase"/>
    <property type="match status" value="1"/>
</dbReference>
<dbReference type="InterPro" id="IPR015942">
    <property type="entry name" value="Asp/Glu/hydantoin_racemase"/>
</dbReference>
<dbReference type="InterPro" id="IPR001920">
    <property type="entry name" value="Asp/Glu_race"/>
</dbReference>
<dbReference type="InterPro" id="IPR018187">
    <property type="entry name" value="Asp/Glu_racemase_AS_1"/>
</dbReference>
<dbReference type="InterPro" id="IPR033134">
    <property type="entry name" value="Asp/Glu_racemase_AS_2"/>
</dbReference>
<dbReference type="InterPro" id="IPR004391">
    <property type="entry name" value="Glu_race"/>
</dbReference>
<dbReference type="NCBIfam" id="TIGR00067">
    <property type="entry name" value="glut_race"/>
    <property type="match status" value="1"/>
</dbReference>
<dbReference type="PANTHER" id="PTHR21198">
    <property type="entry name" value="GLUTAMATE RACEMASE"/>
    <property type="match status" value="1"/>
</dbReference>
<dbReference type="PANTHER" id="PTHR21198:SF2">
    <property type="entry name" value="GLUTAMATE RACEMASE"/>
    <property type="match status" value="1"/>
</dbReference>
<dbReference type="Pfam" id="PF01177">
    <property type="entry name" value="Asp_Glu_race"/>
    <property type="match status" value="1"/>
</dbReference>
<dbReference type="SUPFAM" id="SSF53681">
    <property type="entry name" value="Aspartate/glutamate racemase"/>
    <property type="match status" value="2"/>
</dbReference>
<dbReference type="PROSITE" id="PS00923">
    <property type="entry name" value="ASP_GLU_RACEMASE_1"/>
    <property type="match status" value="1"/>
</dbReference>
<dbReference type="PROSITE" id="PS00924">
    <property type="entry name" value="ASP_GLU_RACEMASE_2"/>
    <property type="match status" value="1"/>
</dbReference>
<feature type="chain" id="PRO_1000078584" description="Glutamate racemase">
    <location>
        <begin position="1"/>
        <end position="257"/>
    </location>
</feature>
<feature type="active site" description="Proton donor/acceptor" evidence="1">
    <location>
        <position position="75"/>
    </location>
</feature>
<feature type="active site" description="Proton donor/acceptor" evidence="1">
    <location>
        <position position="176"/>
    </location>
</feature>
<feature type="binding site" evidence="1">
    <location>
        <begin position="12"/>
        <end position="13"/>
    </location>
    <ligand>
        <name>substrate</name>
    </ligand>
</feature>
<feature type="binding site" evidence="1">
    <location>
        <begin position="44"/>
        <end position="45"/>
    </location>
    <ligand>
        <name>substrate</name>
    </ligand>
</feature>
<feature type="binding site" evidence="1">
    <location>
        <begin position="76"/>
        <end position="77"/>
    </location>
    <ligand>
        <name>substrate</name>
    </ligand>
</feature>
<feature type="binding site" evidence="1">
    <location>
        <begin position="177"/>
        <end position="178"/>
    </location>
    <ligand>
        <name>substrate</name>
    </ligand>
</feature>
<feature type="strand" evidence="2">
    <location>
        <begin position="8"/>
        <end position="15"/>
    </location>
</feature>
<feature type="helix" evidence="2">
    <location>
        <begin position="18"/>
        <end position="27"/>
    </location>
</feature>
<feature type="strand" evidence="2">
    <location>
        <begin position="33"/>
        <end position="37"/>
    </location>
</feature>
<feature type="turn" evidence="3">
    <location>
        <begin position="39"/>
        <end position="41"/>
    </location>
</feature>
<feature type="helix" evidence="2">
    <location>
        <begin position="49"/>
        <end position="65"/>
    </location>
</feature>
<feature type="strand" evidence="2">
    <location>
        <begin position="69"/>
        <end position="73"/>
    </location>
</feature>
<feature type="helix" evidence="2">
    <location>
        <begin position="76"/>
        <end position="82"/>
    </location>
</feature>
<feature type="helix" evidence="2">
    <location>
        <begin position="85"/>
        <end position="89"/>
    </location>
</feature>
<feature type="strand" evidence="2">
    <location>
        <begin position="90"/>
        <end position="92"/>
    </location>
</feature>
<feature type="helix" evidence="2">
    <location>
        <begin position="99"/>
        <end position="105"/>
    </location>
</feature>
<feature type="strand" evidence="2">
    <location>
        <begin position="108"/>
        <end position="115"/>
    </location>
</feature>
<feature type="helix" evidence="2">
    <location>
        <begin position="117"/>
        <end position="122"/>
    </location>
</feature>
<feature type="helix" evidence="2">
    <location>
        <begin position="125"/>
        <end position="127"/>
    </location>
</feature>
<feature type="strand" evidence="2">
    <location>
        <begin position="132"/>
        <end position="136"/>
    </location>
</feature>
<feature type="helix" evidence="2">
    <location>
        <begin position="140"/>
        <end position="145"/>
    </location>
</feature>
<feature type="strand" evidence="3">
    <location>
        <begin position="149"/>
        <end position="151"/>
    </location>
</feature>
<feature type="helix" evidence="2">
    <location>
        <begin position="152"/>
        <end position="162"/>
    </location>
</feature>
<feature type="strand" evidence="2">
    <location>
        <begin position="171"/>
        <end position="176"/>
    </location>
</feature>
<feature type="helix" evidence="2">
    <location>
        <begin position="179"/>
        <end position="182"/>
    </location>
</feature>
<feature type="helix" evidence="2">
    <location>
        <begin position="183"/>
        <end position="189"/>
    </location>
</feature>
<feature type="strand" evidence="2">
    <location>
        <begin position="194"/>
        <end position="197"/>
    </location>
</feature>
<feature type="helix" evidence="2">
    <location>
        <begin position="198"/>
        <end position="212"/>
    </location>
</feature>
<feature type="strand" evidence="2">
    <location>
        <begin position="224"/>
        <end position="230"/>
    </location>
</feature>
<feature type="helix" evidence="2">
    <location>
        <begin position="232"/>
        <end position="241"/>
    </location>
</feature>
<feature type="strand" evidence="2">
    <location>
        <begin position="248"/>
        <end position="251"/>
    </location>
</feature>
<feature type="helix" evidence="2">
    <location>
        <begin position="254"/>
        <end position="256"/>
    </location>
</feature>
<organism>
    <name type="scientific">Thermus thermophilus (strain ATCC 27634 / DSM 579 / HB8)</name>
    <dbReference type="NCBI Taxonomy" id="300852"/>
    <lineage>
        <taxon>Bacteria</taxon>
        <taxon>Thermotogati</taxon>
        <taxon>Deinococcota</taxon>
        <taxon>Deinococci</taxon>
        <taxon>Thermales</taxon>
        <taxon>Thermaceae</taxon>
        <taxon>Thermus</taxon>
    </lineage>
</organism>
<name>MURI_THET8</name>
<accession>Q5SHT7</accession>
<reference key="1">
    <citation type="submission" date="2004-11" db="EMBL/GenBank/DDBJ databases">
        <title>Complete genome sequence of Thermus thermophilus HB8.</title>
        <authorList>
            <person name="Masui R."/>
            <person name="Kurokawa K."/>
            <person name="Nakagawa N."/>
            <person name="Tokunaga F."/>
            <person name="Koyama Y."/>
            <person name="Shibata T."/>
            <person name="Oshima T."/>
            <person name="Yokoyama S."/>
            <person name="Yasunaga T."/>
            <person name="Kuramitsu S."/>
        </authorList>
    </citation>
    <scope>NUCLEOTIDE SEQUENCE [LARGE SCALE GENOMIC DNA]</scope>
    <source>
        <strain>ATCC 27634 / DSM 579 / HB8</strain>
    </source>
</reference>
<gene>
    <name evidence="1" type="primary">murI</name>
    <name type="ordered locus">TTHA1643</name>
</gene>